<feature type="chain" id="PRO_0000097359" description="THO complex subunit 2">
    <location>
        <begin position="1"/>
        <end position="1597"/>
    </location>
</feature>
<feature type="region of interest" description="Disordered" evidence="1">
    <location>
        <begin position="1250"/>
        <end position="1274"/>
    </location>
</feature>
<feature type="region of interest" description="Disordered" evidence="1">
    <location>
        <begin position="1384"/>
        <end position="1597"/>
    </location>
</feature>
<feature type="compositionally biased region" description="Polar residues" evidence="1">
    <location>
        <begin position="1419"/>
        <end position="1430"/>
    </location>
</feature>
<feature type="compositionally biased region" description="Basic and acidic residues" evidence="1">
    <location>
        <begin position="1458"/>
        <end position="1490"/>
    </location>
</feature>
<feature type="compositionally biased region" description="Basic and acidic residues" evidence="1">
    <location>
        <begin position="1500"/>
        <end position="1512"/>
    </location>
</feature>
<feature type="compositionally biased region" description="Basic and acidic residues" evidence="1">
    <location>
        <begin position="1522"/>
        <end position="1545"/>
    </location>
</feature>
<feature type="compositionally biased region" description="Basic and acidic residues" evidence="1">
    <location>
        <begin position="1554"/>
        <end position="1567"/>
    </location>
</feature>
<feature type="compositionally biased region" description="Polar residues" evidence="1">
    <location>
        <begin position="1568"/>
        <end position="1582"/>
    </location>
</feature>
<feature type="turn" evidence="12">
    <location>
        <begin position="2"/>
        <end position="4"/>
    </location>
</feature>
<feature type="helix" evidence="12">
    <location>
        <begin position="5"/>
        <end position="14"/>
    </location>
</feature>
<feature type="strand" evidence="12">
    <location>
        <begin position="20"/>
        <end position="23"/>
    </location>
</feature>
<feature type="strand" evidence="12">
    <location>
        <begin position="31"/>
        <end position="34"/>
    </location>
</feature>
<feature type="helix" evidence="12">
    <location>
        <begin position="37"/>
        <end position="47"/>
    </location>
</feature>
<feature type="turn" evidence="12">
    <location>
        <begin position="54"/>
        <end position="57"/>
    </location>
</feature>
<feature type="helix" evidence="12">
    <location>
        <begin position="58"/>
        <end position="73"/>
    </location>
</feature>
<feature type="helix" evidence="12">
    <location>
        <begin position="83"/>
        <end position="96"/>
    </location>
</feature>
<feature type="turn" evidence="12">
    <location>
        <begin position="97"/>
        <end position="99"/>
    </location>
</feature>
<feature type="strand" evidence="12">
    <location>
        <begin position="100"/>
        <end position="103"/>
    </location>
</feature>
<feature type="helix" evidence="12">
    <location>
        <begin position="105"/>
        <end position="116"/>
    </location>
</feature>
<feature type="strand" evidence="11">
    <location>
        <begin position="117"/>
        <end position="119"/>
    </location>
</feature>
<feature type="helix" evidence="12">
    <location>
        <begin position="122"/>
        <end position="129"/>
    </location>
</feature>
<feature type="strand" evidence="13">
    <location>
        <begin position="133"/>
        <end position="135"/>
    </location>
</feature>
<feature type="helix" evidence="12">
    <location>
        <begin position="136"/>
        <end position="141"/>
    </location>
</feature>
<feature type="helix" evidence="12">
    <location>
        <begin position="144"/>
        <end position="146"/>
    </location>
</feature>
<feature type="turn" evidence="12">
    <location>
        <begin position="147"/>
        <end position="149"/>
    </location>
</feature>
<feature type="turn" evidence="12">
    <location>
        <begin position="152"/>
        <end position="154"/>
    </location>
</feature>
<feature type="helix" evidence="12">
    <location>
        <begin position="155"/>
        <end position="165"/>
    </location>
</feature>
<feature type="strand" evidence="12">
    <location>
        <begin position="166"/>
        <end position="168"/>
    </location>
</feature>
<feature type="turn" evidence="12">
    <location>
        <begin position="175"/>
        <end position="182"/>
    </location>
</feature>
<feature type="helix" evidence="12">
    <location>
        <begin position="183"/>
        <end position="192"/>
    </location>
</feature>
<feature type="strand" evidence="12">
    <location>
        <begin position="199"/>
        <end position="202"/>
    </location>
</feature>
<feature type="helix" evidence="12">
    <location>
        <begin position="203"/>
        <end position="215"/>
    </location>
</feature>
<feature type="helix" evidence="12">
    <location>
        <begin position="221"/>
        <end position="230"/>
    </location>
</feature>
<feature type="helix" evidence="13">
    <location>
        <begin position="231"/>
        <end position="233"/>
    </location>
</feature>
<feature type="turn" evidence="12">
    <location>
        <begin position="235"/>
        <end position="237"/>
    </location>
</feature>
<feature type="helix" evidence="12">
    <location>
        <begin position="240"/>
        <end position="246"/>
    </location>
</feature>
<feature type="strand" evidence="11">
    <location>
        <begin position="249"/>
        <end position="252"/>
    </location>
</feature>
<feature type="strand" evidence="12">
    <location>
        <begin position="260"/>
        <end position="264"/>
    </location>
</feature>
<feature type="strand" evidence="12">
    <location>
        <begin position="266"/>
        <end position="268"/>
    </location>
</feature>
<feature type="turn" evidence="12">
    <location>
        <begin position="272"/>
        <end position="274"/>
    </location>
</feature>
<feature type="helix" evidence="12">
    <location>
        <begin position="275"/>
        <end position="281"/>
    </location>
</feature>
<feature type="strand" evidence="12">
    <location>
        <begin position="287"/>
        <end position="289"/>
    </location>
</feature>
<feature type="turn" evidence="12">
    <location>
        <begin position="290"/>
        <end position="292"/>
    </location>
</feature>
<feature type="helix" evidence="12">
    <location>
        <begin position="294"/>
        <end position="300"/>
    </location>
</feature>
<feature type="helix" evidence="12">
    <location>
        <begin position="303"/>
        <end position="306"/>
    </location>
</feature>
<feature type="helix" evidence="12">
    <location>
        <begin position="313"/>
        <end position="316"/>
    </location>
</feature>
<feature type="strand" evidence="12">
    <location>
        <begin position="317"/>
        <end position="321"/>
    </location>
</feature>
<feature type="helix" evidence="12">
    <location>
        <begin position="323"/>
        <end position="340"/>
    </location>
</feature>
<feature type="turn" evidence="13">
    <location>
        <begin position="351"/>
        <end position="353"/>
    </location>
</feature>
<feature type="helix" evidence="12">
    <location>
        <begin position="392"/>
        <end position="395"/>
    </location>
</feature>
<feature type="helix" evidence="12">
    <location>
        <begin position="396"/>
        <end position="398"/>
    </location>
</feature>
<feature type="strand" evidence="12">
    <location>
        <begin position="400"/>
        <end position="403"/>
    </location>
</feature>
<feature type="helix" evidence="12">
    <location>
        <begin position="404"/>
        <end position="414"/>
    </location>
</feature>
<feature type="helix" evidence="12">
    <location>
        <begin position="418"/>
        <end position="424"/>
    </location>
</feature>
<feature type="strand" evidence="12">
    <location>
        <begin position="430"/>
        <end position="433"/>
    </location>
</feature>
<feature type="helix" evidence="12">
    <location>
        <begin position="437"/>
        <end position="456"/>
    </location>
</feature>
<feature type="helix" evidence="12">
    <location>
        <begin position="458"/>
        <end position="462"/>
    </location>
</feature>
<feature type="helix" evidence="12">
    <location>
        <begin position="464"/>
        <end position="467"/>
    </location>
</feature>
<feature type="strand" evidence="12">
    <location>
        <begin position="473"/>
        <end position="475"/>
    </location>
</feature>
<feature type="turn" evidence="12">
    <location>
        <begin position="476"/>
        <end position="479"/>
    </location>
</feature>
<feature type="strand" evidence="12">
    <location>
        <begin position="480"/>
        <end position="482"/>
    </location>
</feature>
<feature type="strand" evidence="12">
    <location>
        <begin position="484"/>
        <end position="492"/>
    </location>
</feature>
<feature type="strand" evidence="12">
    <location>
        <begin position="500"/>
        <end position="507"/>
    </location>
</feature>
<feature type="turn" evidence="12">
    <location>
        <begin position="509"/>
        <end position="512"/>
    </location>
</feature>
<feature type="helix" evidence="12">
    <location>
        <begin position="524"/>
        <end position="527"/>
    </location>
</feature>
<feature type="turn" evidence="12">
    <location>
        <begin position="528"/>
        <end position="530"/>
    </location>
</feature>
<feature type="turn" evidence="12">
    <location>
        <begin position="532"/>
        <end position="534"/>
    </location>
</feature>
<feature type="helix" evidence="12">
    <location>
        <begin position="539"/>
        <end position="541"/>
    </location>
</feature>
<feature type="helix" evidence="12">
    <location>
        <begin position="543"/>
        <end position="559"/>
    </location>
</feature>
<feature type="strand" evidence="12">
    <location>
        <begin position="562"/>
        <end position="566"/>
    </location>
</feature>
<feature type="helix" evidence="12">
    <location>
        <begin position="567"/>
        <end position="579"/>
    </location>
</feature>
<feature type="helix" evidence="12">
    <location>
        <begin position="582"/>
        <end position="585"/>
    </location>
</feature>
<feature type="helix" evidence="12">
    <location>
        <begin position="592"/>
        <end position="599"/>
    </location>
</feature>
<feature type="helix" evidence="12">
    <location>
        <begin position="602"/>
        <end position="604"/>
    </location>
</feature>
<feature type="helix" evidence="12">
    <location>
        <begin position="607"/>
        <end position="616"/>
    </location>
</feature>
<feature type="turn" evidence="12">
    <location>
        <begin position="617"/>
        <end position="622"/>
    </location>
</feature>
<feature type="helix" evidence="12">
    <location>
        <begin position="626"/>
        <end position="642"/>
    </location>
</feature>
<feature type="strand" evidence="13">
    <location>
        <begin position="643"/>
        <end position="645"/>
    </location>
</feature>
<feature type="strand" evidence="12">
    <location>
        <begin position="648"/>
        <end position="650"/>
    </location>
</feature>
<feature type="turn" evidence="12">
    <location>
        <begin position="651"/>
        <end position="653"/>
    </location>
</feature>
<feature type="helix" evidence="12">
    <location>
        <begin position="654"/>
        <end position="664"/>
    </location>
</feature>
<feature type="helix" evidence="12">
    <location>
        <begin position="666"/>
        <end position="669"/>
    </location>
</feature>
<feature type="helix" evidence="12">
    <location>
        <begin position="671"/>
        <end position="674"/>
    </location>
</feature>
<feature type="turn" evidence="12">
    <location>
        <begin position="675"/>
        <end position="679"/>
    </location>
</feature>
<feature type="strand" evidence="12">
    <location>
        <begin position="680"/>
        <end position="682"/>
    </location>
</feature>
<feature type="helix" evidence="12">
    <location>
        <begin position="684"/>
        <end position="690"/>
    </location>
</feature>
<feature type="helix" evidence="12">
    <location>
        <begin position="691"/>
        <end position="693"/>
    </location>
</feature>
<feature type="helix" evidence="12">
    <location>
        <begin position="696"/>
        <end position="710"/>
    </location>
</feature>
<feature type="strand" evidence="12">
    <location>
        <begin position="711"/>
        <end position="714"/>
    </location>
</feature>
<feature type="strand" evidence="12">
    <location>
        <begin position="719"/>
        <end position="723"/>
    </location>
</feature>
<feature type="helix" evidence="12">
    <location>
        <begin position="727"/>
        <end position="741"/>
    </location>
</feature>
<feature type="turn" evidence="12">
    <location>
        <begin position="748"/>
        <end position="750"/>
    </location>
</feature>
<feature type="helix" evidence="12">
    <location>
        <begin position="751"/>
        <end position="760"/>
    </location>
</feature>
<feature type="helix" evidence="12">
    <location>
        <begin position="764"/>
        <end position="775"/>
    </location>
</feature>
<feature type="strand" evidence="13">
    <location>
        <begin position="782"/>
        <end position="784"/>
    </location>
</feature>
<feature type="helix" evidence="12">
    <location>
        <begin position="787"/>
        <end position="790"/>
    </location>
</feature>
<feature type="turn" evidence="12">
    <location>
        <begin position="791"/>
        <end position="794"/>
    </location>
</feature>
<feature type="helix" evidence="12">
    <location>
        <begin position="798"/>
        <end position="806"/>
    </location>
</feature>
<feature type="strand" evidence="12">
    <location>
        <begin position="811"/>
        <end position="814"/>
    </location>
</feature>
<feature type="helix" evidence="12">
    <location>
        <begin position="815"/>
        <end position="827"/>
    </location>
</feature>
<feature type="helix" evidence="12">
    <location>
        <begin position="834"/>
        <end position="844"/>
    </location>
</feature>
<feature type="turn" evidence="12">
    <location>
        <begin position="845"/>
        <end position="847"/>
    </location>
</feature>
<feature type="helix" evidence="12">
    <location>
        <begin position="854"/>
        <end position="876"/>
    </location>
</feature>
<feature type="helix" evidence="12">
    <location>
        <begin position="880"/>
        <end position="885"/>
    </location>
</feature>
<feature type="turn" evidence="12">
    <location>
        <begin position="889"/>
        <end position="895"/>
    </location>
</feature>
<feature type="helix" evidence="12">
    <location>
        <begin position="900"/>
        <end position="906"/>
    </location>
</feature>
<feature type="strand" evidence="12">
    <location>
        <begin position="907"/>
        <end position="909"/>
    </location>
</feature>
<feature type="helix" evidence="12">
    <location>
        <begin position="910"/>
        <end position="913"/>
    </location>
</feature>
<feature type="turn" evidence="12">
    <location>
        <begin position="914"/>
        <end position="917"/>
    </location>
</feature>
<feature type="helix" evidence="12">
    <location>
        <begin position="922"/>
        <end position="927"/>
    </location>
</feature>
<feature type="turn" evidence="11">
    <location>
        <begin position="933"/>
        <end position="935"/>
    </location>
</feature>
<feature type="strand" evidence="12">
    <location>
        <begin position="938"/>
        <end position="940"/>
    </location>
</feature>
<feature type="helix" evidence="12">
    <location>
        <begin position="942"/>
        <end position="950"/>
    </location>
</feature>
<feature type="turn" evidence="12">
    <location>
        <begin position="954"/>
        <end position="956"/>
    </location>
</feature>
<feature type="helix" evidence="12">
    <location>
        <begin position="961"/>
        <end position="964"/>
    </location>
</feature>
<feature type="helix" evidence="12">
    <location>
        <begin position="967"/>
        <end position="973"/>
    </location>
</feature>
<feature type="helix" evidence="12">
    <location>
        <begin position="980"/>
        <end position="1012"/>
    </location>
</feature>
<feature type="helix" evidence="12">
    <location>
        <begin position="1015"/>
        <end position="1018"/>
    </location>
</feature>
<feature type="helix" evidence="12">
    <location>
        <begin position="1024"/>
        <end position="1033"/>
    </location>
</feature>
<feature type="helix" evidence="12">
    <location>
        <begin position="1035"/>
        <end position="1041"/>
    </location>
</feature>
<feature type="helix" evidence="12">
    <location>
        <begin position="1043"/>
        <end position="1056"/>
    </location>
</feature>
<feature type="helix" evidence="12">
    <location>
        <begin position="1059"/>
        <end position="1071"/>
    </location>
</feature>
<feature type="helix" evidence="12">
    <location>
        <begin position="1075"/>
        <end position="1078"/>
    </location>
</feature>
<feature type="helix" evidence="12">
    <location>
        <begin position="1084"/>
        <end position="1094"/>
    </location>
</feature>
<feature type="turn" evidence="12">
    <location>
        <begin position="1095"/>
        <end position="1097"/>
    </location>
</feature>
<feature type="helix" evidence="12">
    <location>
        <begin position="1098"/>
        <end position="1105"/>
    </location>
</feature>
<feature type="helix" evidence="12">
    <location>
        <begin position="1112"/>
        <end position="1133"/>
    </location>
</feature>
<feature type="strand" evidence="12">
    <location>
        <begin position="1136"/>
        <end position="1138"/>
    </location>
</feature>
<feature type="helix" evidence="12">
    <location>
        <begin position="1139"/>
        <end position="1151"/>
    </location>
</feature>
<feature type="helix" evidence="12">
    <location>
        <begin position="1152"/>
        <end position="1154"/>
    </location>
</feature>
<feature type="helix" evidence="12">
    <location>
        <begin position="1159"/>
        <end position="1167"/>
    </location>
</feature>
<feature type="turn" evidence="12">
    <location>
        <begin position="1168"/>
        <end position="1171"/>
    </location>
</feature>
<feature type="helix" evidence="12">
    <location>
        <begin position="1172"/>
        <end position="1175"/>
    </location>
</feature>
<feature type="helix" evidence="12">
    <location>
        <begin position="1182"/>
        <end position="1193"/>
    </location>
</feature>
<feature type="turn" evidence="12">
    <location>
        <begin position="1194"/>
        <end position="1197"/>
    </location>
</feature>
<feature type="strand" evidence="11">
    <location>
        <begin position="1198"/>
        <end position="1200"/>
    </location>
</feature>
<feature type="turn" evidence="12">
    <location>
        <begin position="1203"/>
        <end position="1205"/>
    </location>
</feature>
<feature type="helix" evidence="12">
    <location>
        <begin position="1212"/>
        <end position="1230"/>
    </location>
</feature>
<feature type="helix" evidence="12">
    <location>
        <begin position="1242"/>
        <end position="1254"/>
    </location>
</feature>
<proteinExistence type="evidence at protein level"/>
<dbReference type="EMBL" id="U22361">
    <property type="protein sequence ID" value="AAA93160.1"/>
    <property type="molecule type" value="Genomic_DNA"/>
</dbReference>
<dbReference type="EMBL" id="Z46843">
    <property type="protein sequence ID" value="CAA86886.1"/>
    <property type="molecule type" value="Genomic_DNA"/>
</dbReference>
<dbReference type="EMBL" id="Z71416">
    <property type="protein sequence ID" value="CAA96023.1"/>
    <property type="molecule type" value="Genomic_DNA"/>
</dbReference>
<dbReference type="EMBL" id="BK006947">
    <property type="protein sequence ID" value="DAA10408.1"/>
    <property type="molecule type" value="Genomic_DNA"/>
</dbReference>
<dbReference type="PIR" id="S55144">
    <property type="entry name" value="S55144"/>
</dbReference>
<dbReference type="RefSeq" id="NP_014260.3">
    <property type="nucleotide sequence ID" value="NM_001182977.3"/>
</dbReference>
<dbReference type="PDB" id="7APX">
    <property type="method" value="EM"/>
    <property type="resolution" value="3.40 A"/>
    <property type="chains" value="A=1-1597"/>
</dbReference>
<dbReference type="PDB" id="7AQO">
    <property type="method" value="EM"/>
    <property type="resolution" value="4.50 A"/>
    <property type="chains" value="A/G=1-1597"/>
</dbReference>
<dbReference type="PDB" id="7LUV">
    <property type="method" value="EM"/>
    <property type="resolution" value="3.70 A"/>
    <property type="chains" value="C=1-1257"/>
</dbReference>
<dbReference type="PDB" id="7V2W">
    <property type="method" value="EM"/>
    <property type="resolution" value="3.20 A"/>
    <property type="chains" value="G=1-1597"/>
</dbReference>
<dbReference type="PDB" id="7V2Y">
    <property type="method" value="EM"/>
    <property type="resolution" value="3.40 A"/>
    <property type="chains" value="B=1-1597"/>
</dbReference>
<dbReference type="PDBsum" id="7APX"/>
<dbReference type="PDBsum" id="7AQO"/>
<dbReference type="PDBsum" id="7LUV"/>
<dbReference type="PDBsum" id="7V2W"/>
<dbReference type="PDBsum" id="7V2Y"/>
<dbReference type="EMDB" id="EMD-11859"/>
<dbReference type="EMDB" id="EMD-16841"/>
<dbReference type="EMDB" id="EMD-23527"/>
<dbReference type="EMDB" id="EMD-31669"/>
<dbReference type="EMDB" id="EMD-31670"/>
<dbReference type="SMR" id="P53552"/>
<dbReference type="BioGRID" id="35687">
    <property type="interactions" value="100"/>
</dbReference>
<dbReference type="ComplexPortal" id="CPX-1792">
    <property type="entry name" value="THO complex"/>
</dbReference>
<dbReference type="ComplexPortal" id="CPX-1793">
    <property type="entry name" value="TREX complex"/>
</dbReference>
<dbReference type="DIP" id="DIP-6265N"/>
<dbReference type="FunCoup" id="P53552">
    <property type="interactions" value="744"/>
</dbReference>
<dbReference type="IntAct" id="P53552">
    <property type="interactions" value="16"/>
</dbReference>
<dbReference type="MINT" id="P53552"/>
<dbReference type="STRING" id="4932.YNL139C"/>
<dbReference type="TCDB" id="3.A.22.1.1">
    <property type="family name" value="the transcription-coupled trex/tap nuclear mrna export complex (trex) family"/>
</dbReference>
<dbReference type="GlyGen" id="P53552">
    <property type="glycosylation" value="2 sites, 1 O-linked glycan (2 sites)"/>
</dbReference>
<dbReference type="iPTMnet" id="P53552"/>
<dbReference type="PaxDb" id="4932-YNL139C"/>
<dbReference type="PeptideAtlas" id="P53552"/>
<dbReference type="EnsemblFungi" id="YNL139C_mRNA">
    <property type="protein sequence ID" value="YNL139C"/>
    <property type="gene ID" value="YNL139C"/>
</dbReference>
<dbReference type="GeneID" id="855583"/>
<dbReference type="KEGG" id="sce:YNL139C"/>
<dbReference type="AGR" id="SGD:S000005083"/>
<dbReference type="SGD" id="S000005083">
    <property type="gene designation" value="THO2"/>
</dbReference>
<dbReference type="VEuPathDB" id="FungiDB:YNL139C"/>
<dbReference type="eggNOG" id="KOG1874">
    <property type="taxonomic scope" value="Eukaryota"/>
</dbReference>
<dbReference type="GeneTree" id="ENSGT00710000106792"/>
<dbReference type="HOGENOM" id="CLU_003123_0_0_1"/>
<dbReference type="InParanoid" id="P53552"/>
<dbReference type="OMA" id="QERWTCI"/>
<dbReference type="OrthoDB" id="29024at2759"/>
<dbReference type="BioCyc" id="YEAST:G3O-33158-MONOMER"/>
<dbReference type="BioGRID-ORCS" id="855583">
    <property type="hits" value="3 hits in 10 CRISPR screens"/>
</dbReference>
<dbReference type="PRO" id="PR:P53552"/>
<dbReference type="Proteomes" id="UP000002311">
    <property type="component" value="Chromosome XIV"/>
</dbReference>
<dbReference type="RNAct" id="P53552">
    <property type="molecule type" value="protein"/>
</dbReference>
<dbReference type="GO" id="GO:0000781">
    <property type="term" value="C:chromosome, telomeric region"/>
    <property type="evidence" value="ECO:0000314"/>
    <property type="project" value="SGD"/>
</dbReference>
<dbReference type="GO" id="GO:0000446">
    <property type="term" value="C:nucleoplasmic THO complex"/>
    <property type="evidence" value="ECO:0000315"/>
    <property type="project" value="SGD"/>
</dbReference>
<dbReference type="GO" id="GO:0005634">
    <property type="term" value="C:nucleus"/>
    <property type="evidence" value="ECO:0000314"/>
    <property type="project" value="SGD"/>
</dbReference>
<dbReference type="GO" id="GO:0000347">
    <property type="term" value="C:THO complex"/>
    <property type="evidence" value="ECO:0000353"/>
    <property type="project" value="ComplexPortal"/>
</dbReference>
<dbReference type="GO" id="GO:0000445">
    <property type="term" value="C:THO complex part of transcription export complex"/>
    <property type="evidence" value="ECO:0000314"/>
    <property type="project" value="SGD"/>
</dbReference>
<dbReference type="GO" id="GO:0000346">
    <property type="term" value="C:transcription export complex"/>
    <property type="evidence" value="ECO:0000353"/>
    <property type="project" value="ComplexPortal"/>
</dbReference>
<dbReference type="GO" id="GO:0003729">
    <property type="term" value="F:mRNA binding"/>
    <property type="evidence" value="ECO:0007005"/>
    <property type="project" value="SGD"/>
</dbReference>
<dbReference type="GO" id="GO:0003676">
    <property type="term" value="F:nucleic acid binding"/>
    <property type="evidence" value="ECO:0000314"/>
    <property type="project" value="SGD"/>
</dbReference>
<dbReference type="GO" id="GO:0097185">
    <property type="term" value="P:cellular response to azide"/>
    <property type="evidence" value="ECO:0000315"/>
    <property type="project" value="SGD"/>
</dbReference>
<dbReference type="GO" id="GO:0006310">
    <property type="term" value="P:DNA recombination"/>
    <property type="evidence" value="ECO:0000315"/>
    <property type="project" value="SGD"/>
</dbReference>
<dbReference type="GO" id="GO:0031124">
    <property type="term" value="P:mRNA 3'-end processing"/>
    <property type="evidence" value="ECO:0000315"/>
    <property type="project" value="SGD"/>
</dbReference>
<dbReference type="GO" id="GO:0006406">
    <property type="term" value="P:mRNA export from nucleus"/>
    <property type="evidence" value="ECO:0000315"/>
    <property type="project" value="SGD"/>
</dbReference>
<dbReference type="GO" id="GO:0045943">
    <property type="term" value="P:positive regulation of transcription by RNA polymerase I"/>
    <property type="evidence" value="ECO:0000315"/>
    <property type="project" value="SGD"/>
</dbReference>
<dbReference type="GO" id="GO:2001209">
    <property type="term" value="P:positive regulation of transcription elongation by RNA polymerase I"/>
    <property type="evidence" value="ECO:0000315"/>
    <property type="project" value="SGD"/>
</dbReference>
<dbReference type="GO" id="GO:0034063">
    <property type="term" value="P:stress granule assembly"/>
    <property type="evidence" value="ECO:0000315"/>
    <property type="project" value="SGD"/>
</dbReference>
<dbReference type="GO" id="GO:0006368">
    <property type="term" value="P:transcription elongation by RNA polymerase II"/>
    <property type="evidence" value="ECO:0000315"/>
    <property type="project" value="SGD"/>
</dbReference>
<dbReference type="GO" id="GO:0006283">
    <property type="term" value="P:transcription-coupled nucleotide-excision repair"/>
    <property type="evidence" value="ECO:0000315"/>
    <property type="project" value="SGD"/>
</dbReference>
<dbReference type="InterPro" id="IPR040007">
    <property type="entry name" value="Tho2"/>
</dbReference>
<dbReference type="InterPro" id="IPR021418">
    <property type="entry name" value="THO_THOC2_C"/>
</dbReference>
<dbReference type="InterPro" id="IPR021726">
    <property type="entry name" value="THO_THOC2_N"/>
</dbReference>
<dbReference type="InterPro" id="IPR032302">
    <property type="entry name" value="THOC2_N"/>
</dbReference>
<dbReference type="PANTHER" id="PTHR21597:SF0">
    <property type="entry name" value="THO COMPLEX SUBUNIT 2"/>
    <property type="match status" value="1"/>
</dbReference>
<dbReference type="PANTHER" id="PTHR21597">
    <property type="entry name" value="THO2 PROTEIN"/>
    <property type="match status" value="1"/>
</dbReference>
<dbReference type="Pfam" id="PF11262">
    <property type="entry name" value="Tho2"/>
    <property type="match status" value="2"/>
</dbReference>
<dbReference type="Pfam" id="PF11732">
    <property type="entry name" value="Thoc2"/>
    <property type="match status" value="1"/>
</dbReference>
<dbReference type="Pfam" id="PF16134">
    <property type="entry name" value="THOC2_N"/>
    <property type="match status" value="1"/>
</dbReference>
<reference key="1">
    <citation type="journal article" date="2000" name="Gene">
        <title>RLR1 (THO2), required for expressing lacZ fusions in yeast, is conserved from yeast to humans and is a suppressor of SIN4.</title>
        <authorList>
            <person name="West R.W. Jr."/>
            <person name="Kruger B."/>
            <person name="Thomas S."/>
            <person name="Ma J."/>
            <person name="Milgrom E."/>
        </authorList>
    </citation>
    <scope>NUCLEOTIDE SEQUENCE [GENOMIC DNA]</scope>
    <source>
        <strain>YM256</strain>
    </source>
</reference>
<reference key="2">
    <citation type="journal article" date="1995" name="Yeast">
        <title>A 43.5 kb segment of yeast chromosome XIV, which contains MFA2, MEP2, CAP/SRV2, NAM9, FKB1/FPR1/RBP1, MOM22 and CPT1, predicts an adenosine deaminase gene and 14 new open reading frames.</title>
        <authorList>
            <person name="Mallet L."/>
            <person name="Bussereau F."/>
            <person name="Jacquet M."/>
        </authorList>
    </citation>
    <scope>NUCLEOTIDE SEQUENCE [GENOMIC DNA]</scope>
    <source>
        <strain>ATCC 204508 / S288c</strain>
    </source>
</reference>
<reference key="3">
    <citation type="journal article" date="1997" name="Nature">
        <title>The nucleotide sequence of Saccharomyces cerevisiae chromosome XIV and its evolutionary implications.</title>
        <authorList>
            <person name="Philippsen P."/>
            <person name="Kleine K."/>
            <person name="Poehlmann R."/>
            <person name="Duesterhoeft A."/>
            <person name="Hamberg K."/>
            <person name="Hegemann J.H."/>
            <person name="Obermaier B."/>
            <person name="Urrestarazu L.A."/>
            <person name="Aert R."/>
            <person name="Albermann K."/>
            <person name="Altmann R."/>
            <person name="Andre B."/>
            <person name="Baladron V."/>
            <person name="Ballesta J.P.G."/>
            <person name="Becam A.-M."/>
            <person name="Beinhauer J.D."/>
            <person name="Boskovic J."/>
            <person name="Buitrago M.J."/>
            <person name="Bussereau F."/>
            <person name="Coster F."/>
            <person name="Crouzet M."/>
            <person name="D'Angelo M."/>
            <person name="Dal Pero F."/>
            <person name="De Antoni A."/>
            <person name="del Rey F."/>
            <person name="Doignon F."/>
            <person name="Domdey H."/>
            <person name="Dubois E."/>
            <person name="Fiedler T.A."/>
            <person name="Fleig U."/>
            <person name="Floeth M."/>
            <person name="Fritz C."/>
            <person name="Gaillardin C."/>
            <person name="Garcia-Cantalejo J.M."/>
            <person name="Glansdorff N."/>
            <person name="Goffeau A."/>
            <person name="Gueldener U."/>
            <person name="Herbert C.J."/>
            <person name="Heumann K."/>
            <person name="Heuss-Neitzel D."/>
            <person name="Hilbert H."/>
            <person name="Hinni K."/>
            <person name="Iraqui Houssaini I."/>
            <person name="Jacquet M."/>
            <person name="Jimenez A."/>
            <person name="Jonniaux J.-L."/>
            <person name="Karpfinger-Hartl L."/>
            <person name="Lanfranchi G."/>
            <person name="Lepingle A."/>
            <person name="Levesque H."/>
            <person name="Lyck R."/>
            <person name="Maftahi M."/>
            <person name="Mallet L."/>
            <person name="Maurer C.T.C."/>
            <person name="Messenguy F."/>
            <person name="Mewes H.-W."/>
            <person name="Moestl D."/>
            <person name="Nasr F."/>
            <person name="Nicaud J.-M."/>
            <person name="Niedenthal R.K."/>
            <person name="Pandolfo D."/>
            <person name="Pierard A."/>
            <person name="Piravandi E."/>
            <person name="Planta R.J."/>
            <person name="Pohl T.M."/>
            <person name="Purnelle B."/>
            <person name="Rebischung C."/>
            <person name="Remacha M.A."/>
            <person name="Revuelta J.L."/>
            <person name="Rinke M."/>
            <person name="Saiz J.E."/>
            <person name="Sartorello F."/>
            <person name="Scherens B."/>
            <person name="Sen-Gupta M."/>
            <person name="Soler-Mira A."/>
            <person name="Urbanus J.H.M."/>
            <person name="Valle G."/>
            <person name="Van Dyck L."/>
            <person name="Verhasselt P."/>
            <person name="Vierendeels F."/>
            <person name="Vissers S."/>
            <person name="Voet M."/>
            <person name="Volckaert G."/>
            <person name="Wach A."/>
            <person name="Wambutt R."/>
            <person name="Wedler H."/>
            <person name="Zollner A."/>
            <person name="Hani J."/>
        </authorList>
    </citation>
    <scope>NUCLEOTIDE SEQUENCE [LARGE SCALE GENOMIC DNA]</scope>
    <source>
        <strain>ATCC 204508 / S288c</strain>
    </source>
</reference>
<reference key="4">
    <citation type="journal article" date="2014" name="G3 (Bethesda)">
        <title>The reference genome sequence of Saccharomyces cerevisiae: Then and now.</title>
        <authorList>
            <person name="Engel S.R."/>
            <person name="Dietrich F.S."/>
            <person name="Fisk D.G."/>
            <person name="Binkley G."/>
            <person name="Balakrishnan R."/>
            <person name="Costanzo M.C."/>
            <person name="Dwight S.S."/>
            <person name="Hitz B.C."/>
            <person name="Karra K."/>
            <person name="Nash R.S."/>
            <person name="Weng S."/>
            <person name="Wong E.D."/>
            <person name="Lloyd P."/>
            <person name="Skrzypek M.S."/>
            <person name="Miyasato S.R."/>
            <person name="Simison M."/>
            <person name="Cherry J.M."/>
        </authorList>
    </citation>
    <scope>GENOME REANNOTATION</scope>
    <source>
        <strain>ATCC 204508 / S288c</strain>
    </source>
</reference>
<reference key="5">
    <citation type="journal article" date="1998" name="EMBO J.">
        <title>A novel yeast gene, THO2, is involved in RNA pol II transcription and provides new evidence for transcriptional elongation-associated recombination.</title>
        <authorList>
            <person name="Piruat J.I."/>
            <person name="Aguilera A."/>
        </authorList>
    </citation>
    <scope>CHARACTERIZATION</scope>
</reference>
<reference key="6">
    <citation type="journal article" date="2000" name="EMBO J.">
        <title>A protein complex containing Tho2, Hpr1, Mft1 and a novel protein, Thp2, connects transcription elongation with mitotic recombination in Saccharomyces cerevisiae.</title>
        <authorList>
            <person name="Chavez S."/>
            <person name="Beilharz T."/>
            <person name="Rondon A.G."/>
            <person name="Erdjument-Bromage H."/>
            <person name="Tempst P."/>
            <person name="Svejstrup J.Q."/>
            <person name="Lithgow T."/>
            <person name="Aguilera A."/>
        </authorList>
    </citation>
    <scope>IDENTIFICATION IN THO COMPLEX</scope>
    <scope>IDENTIFICATION BY MASS SPECTROMETRY</scope>
    <scope>SUBCELLULAR LOCATION</scope>
</reference>
<reference key="7">
    <citation type="journal article" date="2002" name="EMBO J.">
        <title>The yeast THO complex and mRNA export factors link RNA metabolism with transcription and genome instability.</title>
        <authorList>
            <person name="Jimeno S."/>
            <person name="Rondon A.G."/>
            <person name="Luna R."/>
            <person name="Aguilera A."/>
        </authorList>
    </citation>
    <scope>FUNCTION</scope>
</reference>
<reference key="8">
    <citation type="journal article" date="2002" name="Nature">
        <title>TREX is a conserved complex coupling transcription with messenger RNA export.</title>
        <authorList>
            <person name="Straesser K."/>
            <person name="Masuda S."/>
            <person name="Mason P."/>
            <person name="Pfannstiel J."/>
            <person name="Oppizzi M."/>
            <person name="Rodriguez-Navarro S."/>
            <person name="Rondon A.G."/>
            <person name="Aguilera A."/>
            <person name="Struhl K."/>
            <person name="Reed R."/>
            <person name="Hurt E."/>
        </authorList>
    </citation>
    <scope>IDENTIFICATION IN TREX COMPLEX</scope>
    <scope>IDENTIFICATION BY MASS SPECTROMETRY</scope>
</reference>
<reference key="9">
    <citation type="journal article" date="2003" name="J. Biol. Chem.">
        <title>Molecular evidence that the eukaryotic THO/TREX complex is required for efficient transcription elongation.</title>
        <authorList>
            <person name="Rondon A.G."/>
            <person name="Jimeno S."/>
            <person name="Garcia-Rubio M."/>
            <person name="Aguilera A."/>
        </authorList>
    </citation>
    <scope>FUNCTION</scope>
</reference>
<reference key="10">
    <citation type="journal article" date="2003" name="Mol. Cell">
        <title>Cotranscriptionally formed DNA:RNA hybrids mediate transcription elongation impairment and transcription-associated recombination.</title>
        <authorList>
            <person name="Huertas P."/>
            <person name="Aguilera A."/>
        </authorList>
    </citation>
    <scope>FUNCTION</scope>
</reference>
<reference key="11">
    <citation type="journal article" date="2003" name="Nature">
        <title>Global analysis of protein localization in budding yeast.</title>
        <authorList>
            <person name="Huh W.-K."/>
            <person name="Falvo J.V."/>
            <person name="Gerke L.C."/>
            <person name="Carroll A.S."/>
            <person name="Howson R.W."/>
            <person name="Weissman J.S."/>
            <person name="O'Shea E.K."/>
        </authorList>
    </citation>
    <scope>SUBCELLULAR LOCATION [LARGE SCALE ANALYSIS]</scope>
</reference>
<reference key="12">
    <citation type="journal article" date="2003" name="Nature">
        <title>Global analysis of protein expression in yeast.</title>
        <authorList>
            <person name="Ghaemmaghami S."/>
            <person name="Huh W.-K."/>
            <person name="Bower K."/>
            <person name="Howson R.W."/>
            <person name="Belle A."/>
            <person name="Dephoure N."/>
            <person name="O'Shea E.K."/>
            <person name="Weissman J.S."/>
        </authorList>
    </citation>
    <scope>LEVEL OF PROTEIN EXPRESSION [LARGE SCALE ANALYSIS]</scope>
</reference>
<reference key="13">
    <citation type="journal article" date="2004" name="EMBO J.">
        <title>Biochemical analysis of TREX complex recruitment to intronless and intron-containing yeast genes.</title>
        <authorList>
            <person name="Abruzzi K.C."/>
            <person name="Lacadie S."/>
            <person name="Rosbash M."/>
        </authorList>
    </citation>
    <scope>FUNCTION</scope>
</reference>
<reference key="14">
    <citation type="journal article" date="2008" name="Mol. Cell. Proteomics">
        <title>A multidimensional chromatography technology for in-depth phosphoproteome analysis.</title>
        <authorList>
            <person name="Albuquerque C.P."/>
            <person name="Smolka M.B."/>
            <person name="Payne S.H."/>
            <person name="Bafna V."/>
            <person name="Eng J."/>
            <person name="Zhou H."/>
        </authorList>
    </citation>
    <scope>IDENTIFICATION BY MASS SPECTROMETRY [LARGE SCALE ANALYSIS]</scope>
</reference>
<organism>
    <name type="scientific">Saccharomyces cerevisiae (strain ATCC 204508 / S288c)</name>
    <name type="common">Baker's yeast</name>
    <dbReference type="NCBI Taxonomy" id="559292"/>
    <lineage>
        <taxon>Eukaryota</taxon>
        <taxon>Fungi</taxon>
        <taxon>Dikarya</taxon>
        <taxon>Ascomycota</taxon>
        <taxon>Saccharomycotina</taxon>
        <taxon>Saccharomycetes</taxon>
        <taxon>Saccharomycetales</taxon>
        <taxon>Saccharomycetaceae</taxon>
        <taxon>Saccharomyces</taxon>
    </lineage>
</organism>
<evidence type="ECO:0000256" key="1">
    <source>
        <dbReference type="SAM" id="MobiDB-lite"/>
    </source>
</evidence>
<evidence type="ECO:0000269" key="2">
    <source>
    </source>
</evidence>
<evidence type="ECO:0000269" key="3">
    <source>
    </source>
</evidence>
<evidence type="ECO:0000269" key="4">
    <source>
    </source>
</evidence>
<evidence type="ECO:0000269" key="5">
    <source>
    </source>
</evidence>
<evidence type="ECO:0000269" key="6">
    <source>
    </source>
</evidence>
<evidence type="ECO:0000269" key="7">
    <source>
    </source>
</evidence>
<evidence type="ECO:0000269" key="8">
    <source>
    </source>
</evidence>
<evidence type="ECO:0000269" key="9">
    <source>
    </source>
</evidence>
<evidence type="ECO:0000305" key="10"/>
<evidence type="ECO:0007829" key="11">
    <source>
        <dbReference type="PDB" id="7APX"/>
    </source>
</evidence>
<evidence type="ECO:0007829" key="12">
    <source>
        <dbReference type="PDB" id="7V2W"/>
    </source>
</evidence>
<evidence type="ECO:0007829" key="13">
    <source>
        <dbReference type="PDB" id="7V2Y"/>
    </source>
</evidence>
<comment type="function">
    <text evidence="4 5 6 9">Component the THO subcomplex of the TREX complex, which operates in coupling transcription elongation to mRNA export. The THO complex is recruited to transcribed genes and moves along the gene with the elongating polymerase during transcription. THO is important for stabilizing nascent RNA in the RNA polymerase II elongation complex by preventing formation of DNA:RNA hybrids behind the elongating polymerase. It functions in cotranscriptional formation of an export-competent messenger ribonucleoprotein particle (mRNP) by facilitating the loading of ATP-dependent RNA helicase SUB2 and the mRNA export factor YRA1 along the nascent mRNA.</text>
</comment>
<comment type="subunit">
    <text evidence="2 3">Component of the THO complex, which is composed of HPR1, MFT1, THO2 and THP2. Together with SUB2, TEX1 and YRA1, THO forms the transcription/export (TREX) complex. THO associates with DNA and RNA in vitro.</text>
</comment>
<comment type="interaction">
    <interactant intactId="EBI-15475">
        <id>P53552</id>
    </interactant>
    <interactant intactId="EBI-29234">
        <id>P53851</id>
        <label>TEX1</label>
    </interactant>
    <organismsDiffer>false</organismsDiffer>
    <experiments>3</experiments>
</comment>
<comment type="subcellular location">
    <subcellularLocation>
        <location evidence="2 7">Nucleus</location>
    </subcellularLocation>
</comment>
<comment type="miscellaneous">
    <text evidence="8">Present with 521 molecules/cell in log phase SD medium.</text>
</comment>
<comment type="similarity">
    <text evidence="10">Belongs to the THOC2 family.</text>
</comment>
<gene>
    <name type="primary">THO2</name>
    <name type="synonym">LDB5</name>
    <name type="synonym">RLR1</name>
    <name type="synonym">ZRG13</name>
    <name type="ordered locus">YNL139C</name>
    <name type="ORF">N1209</name>
    <name type="ORF">N1835</name>
</gene>
<name>THO2_YEAST</name>
<accession>P53552</accession>
<accession>D6W142</accession>
<protein>
    <recommendedName>
        <fullName>THO complex subunit 2</fullName>
    </recommendedName>
    <alternativeName>
        <fullName>Low dye-binding protein 5</fullName>
    </alternativeName>
    <alternativeName>
        <fullName>THO complex subunit RLR1</fullName>
    </alternativeName>
    <alternativeName>
        <fullName>Zinc-regulated gene 13 protein</fullName>
    </alternativeName>
</protein>
<keyword id="KW-0002">3D-structure</keyword>
<keyword id="KW-0539">Nucleus</keyword>
<keyword id="KW-1185">Reference proteome</keyword>
<keyword id="KW-0804">Transcription</keyword>
<keyword id="KW-0805">Transcription regulation</keyword>
<sequence length="1597" mass="183931">MAEQTLLSKLNALSQKVIPPASPSQASILTEEVIRNWPERSKTLCSDFTALESNDEKEDWLRTLFIELFDFINKNDENSPLKLSDVASFTNELVNHERQVSQASIVGKMFIAVSSTVPNINDLTTISLCKLIPSLHEELFKFSWISSKLLNKEQTTLLRHLLKKSKYELKKYNLLVENSVGYGQLVALLILAYYDPDNFSKVSAYLKEIYHIMGKYSLDSIRTLDVILNVSSQFITEGYKFFIALLRKSDSWPSSHVANNSNYSSLNEGGNMIAANIISFNLSQYNEEVDKENYERYMDMCCILLKNGFVNFYSIWDNVKPEMEFLQEYIQNLETELEEESTKGVENPLAMAAALSTENETDEDNALVVNDDVNMKDKISEETNADIESKGKQKTQQDILLFGKIKLLERLLIHGCVIPVIHVLKQYPKVLYVSESLSRYLGRVFEYLLNPLYTSMTSSGESKDMATALMITRIDNGILAHKPRLIHKYKTHEPFESLELNSSYVFYYSEWNSNLTPFASVNDLFENSHIYLSIIGPYLGRIPTLLSKISRIGVADIQKNHGSESLHVTIDKWIDYVRKFIFPATSLLQNNPIATSEVYELMKFFPFEKRYFIYNEMMTKLSQDILPLKVSFNKAEREAKSILKALSIDTIAKESRRFAKLISTNPLASLVPAVKQIENYDKVSELVVYTTKYFNDFAYDVLQFVLLLRLTYNRPAVQFDGVNQAMWVQRLSIFIAGLAKNCPNMDISNIITYILKTLHNGNIIAVSILKELIITVGGIRDLNEVNMKQLLMLNSGSPLKQYARHLIYDFRDDNSVISSRLTSFFTDQSAISEIILLLYTLNLKANTQNSHYKILSTRCDEMNTLLWSFIELIKHCLKGKAFEENVLPFVELNNRFHLSTPWTFHIWRDYLDNQLNSNENFSIDELIEGAEFSDVDLTKISKDLFTTFWRLSLYDIHFDKSLYDERKNALSGENTGHMSNRKKHLIQNQIKDILVTGISHQRAFKKTSEFISEKSNVWNKDCGEDQIKIFLQNCVVPRVLFSPSDALFSSFFIFMAFRTENLMSILNTCITSNILKTLLFCCTSSEAGNLGLFFTDVLKKLEKMRLNGDFNDQASRKLYEWHSVITEQVIDLLSEKNYMSIRNGIEFMKHVTSVFPVVKAHIQLVYTTLEENLINEEREDIKLPSSALIGHLKARLKDALELDEFCTLTEEEAEQKRIREMELEEIKNYETACQNEQKQVALRKQLELNKSQRLQNDPPKSVASGSAGLNSKDRYTYSRNEPVIPTKPSSSQWSYSKVTRHVDDINHYLATNHLQKAISLVENDDETRNLRKLSKQNMPIFDFRNSTLEIFERYFRTLIQNPQNPDFAEKIDSLKRYIKNISREPYPDTTSSYSEAAAPEYTKRSSRYSGNAGGKDGYGSSNYRGPSNDRSAPKNIKPISSYAHKRSELPTRPSKSKTYNDRSRALRPTGPDRGDGFDQRDNRLREEYKKNSSQRSQLRFPEKPFQEGKDSSKANPYQASSYKRDSPSENEEKPNKRFKKDETIRNKFQTQDYRNTRDSGAAHRANENQRYNGNRKSNTQALPQGPKGGNYVSRYQR</sequence>